<comment type="function">
    <text evidence="1">Acts as a component of the MCM2-7 complex (MCM complex) which is the replicative helicase essential for 'once per cell cycle' DNA replication initiation and elongation in eukaryotic cells. Core component of CDC45-MCM-GINS (CMG) helicase, the molecular machine that unwinds template DNA during replication, and around which the replisome is built. The active ATPase sites in the MCM2-7 ring are formed through the interaction surfaces of two neighboring subunits such that a critical structure of a conserved arginine finger motif is provided in trans relative to the ATP-binding site of the Walker A box of the adjacent subunit. The six ATPase active sites, however, are likely to contribute differentially to the complex helicase activity. Required for the entry in S phase and for cell division.</text>
</comment>
<comment type="catalytic activity">
    <reaction evidence="1">
        <text>ATP + H2O = ADP + phosphate + H(+)</text>
        <dbReference type="Rhea" id="RHEA:13065"/>
        <dbReference type="ChEBI" id="CHEBI:15377"/>
        <dbReference type="ChEBI" id="CHEBI:15378"/>
        <dbReference type="ChEBI" id="CHEBI:30616"/>
        <dbReference type="ChEBI" id="CHEBI:43474"/>
        <dbReference type="ChEBI" id="CHEBI:456216"/>
        <dbReference type="EC" id="3.6.4.12"/>
    </reaction>
    <physiologicalReaction direction="left-to-right" evidence="1">
        <dbReference type="Rhea" id="RHEA:13066"/>
    </physiologicalReaction>
</comment>
<comment type="subunit">
    <text evidence="1 2 4 5">Component of the MCM2-7 complex. The complex forms a toroidal hexameric ring with the proposed subunit order MCM2-MCM6-MCM4-MCM7-MCM3-MCM5. Component of the CMG helicase complex, a hexameric ring of related MCM2-7 subunits stabilized by CDC45 and the tetrameric GINS complex (By similarity). Associated with the replication-specific DNA polymerase alpha (PubMed:7925275). Interacts with MCMBP (By similarity). Interacts with ANKRD17 (By similarity). Interacts with MCM3AP; this interaction leads to MCM3 acetylation (PubMed:10733502).</text>
</comment>
<comment type="subcellular location">
    <subcellularLocation>
        <location evidence="1">Nucleus</location>
    </subcellularLocation>
    <subcellularLocation>
        <location evidence="1">Chromosome</location>
    </subcellularLocation>
    <text evidence="1">Associated with chromatin before the formation of nuclei and detaches from it as DNA replication progresses.</text>
</comment>
<comment type="PTM">
    <text evidence="4">Acetylated by MCM3AP.</text>
</comment>
<comment type="PTM">
    <text evidence="1">O-glycosylated (O-GlcNAcylated), in a cell cycle-dependent manner.</text>
</comment>
<comment type="similarity">
    <text evidence="7">Belongs to the MCM family.</text>
</comment>
<proteinExistence type="evidence at protein level"/>
<name>MCM3_MOUSE</name>
<feature type="initiator methionine" description="Removed" evidence="1">
    <location>
        <position position="1"/>
    </location>
</feature>
<feature type="chain" id="PRO_0000194094" description="DNA replication licensing factor MCM3">
    <location>
        <begin position="2"/>
        <end position="812"/>
    </location>
</feature>
<feature type="domain" description="MCM">
    <location>
        <begin position="295"/>
        <end position="502"/>
    </location>
</feature>
<feature type="region of interest" description="Disordered" evidence="3">
    <location>
        <begin position="664"/>
        <end position="744"/>
    </location>
</feature>
<feature type="short sequence motif" description="Arginine finger">
    <location>
        <begin position="477"/>
        <end position="480"/>
    </location>
</feature>
<feature type="compositionally biased region" description="Acidic residues" evidence="3">
    <location>
        <begin position="670"/>
        <end position="681"/>
    </location>
</feature>
<feature type="compositionally biased region" description="Basic and acidic residues" evidence="3">
    <location>
        <begin position="720"/>
        <end position="744"/>
    </location>
</feature>
<feature type="binding site" evidence="1">
    <location>
        <position position="353"/>
    </location>
    <ligand>
        <name>ADP</name>
        <dbReference type="ChEBI" id="CHEBI:456216"/>
        <note>ligand shared with MCM5</note>
    </ligand>
</feature>
<feature type="binding site" evidence="1">
    <location>
        <position position="393"/>
    </location>
    <ligand>
        <name>ADP</name>
        <dbReference type="ChEBI" id="CHEBI:456216"/>
        <note>ligand shared with MCM5</note>
    </ligand>
</feature>
<feature type="binding site" evidence="1">
    <location>
        <position position="394"/>
    </location>
    <ligand>
        <name>ADP</name>
        <dbReference type="ChEBI" id="CHEBI:456216"/>
        <note>ligand shared with MCM5</note>
    </ligand>
</feature>
<feature type="binding site" evidence="1">
    <location>
        <position position="395"/>
    </location>
    <ligand>
        <name>ADP</name>
        <dbReference type="ChEBI" id="CHEBI:456216"/>
        <note>ligand shared with MCM5</note>
    </ligand>
</feature>
<feature type="binding site" evidence="1">
    <location>
        <position position="397"/>
    </location>
    <ligand>
        <name>ADP</name>
        <dbReference type="ChEBI" id="CHEBI:456216"/>
        <note>ligand shared with MCM5</note>
    </ligand>
</feature>
<feature type="binding site" evidence="1">
    <location>
        <position position="664"/>
    </location>
    <ligand>
        <name>ATP</name>
        <dbReference type="ChEBI" id="CHEBI:30616"/>
        <note>ligand shared with MCM7</note>
    </ligand>
</feature>
<feature type="modified residue" description="N-acetylalanine" evidence="1">
    <location>
        <position position="2"/>
    </location>
</feature>
<feature type="modified residue" description="Phosphoserine" evidence="10">
    <location>
        <position position="160"/>
    </location>
</feature>
<feature type="modified residue" description="N6-acetyllysine" evidence="11">
    <location>
        <position position="293"/>
    </location>
</feature>
<feature type="modified residue" description="N6-acetyllysine" evidence="11">
    <location>
        <position position="547"/>
    </location>
</feature>
<feature type="modified residue" description="Phosphoserine" evidence="1">
    <location>
        <position position="611"/>
    </location>
</feature>
<feature type="modified residue" description="Phosphoserine" evidence="8 10">
    <location>
        <position position="668"/>
    </location>
</feature>
<feature type="modified residue" description="Phosphoserine" evidence="8 9 10">
    <location>
        <position position="672"/>
    </location>
</feature>
<feature type="modified residue" description="Phosphoserine" evidence="1">
    <location>
        <position position="681"/>
    </location>
</feature>
<feature type="modified residue" description="Phosphotyrosine" evidence="1">
    <location>
        <position position="705"/>
    </location>
</feature>
<feature type="modified residue" description="Phosphoserine" evidence="10">
    <location>
        <position position="708"/>
    </location>
</feature>
<feature type="modified residue" description="Phosphothreonine" evidence="10">
    <location>
        <position position="719"/>
    </location>
</feature>
<feature type="modified residue" description="Phosphothreonine" evidence="1">
    <location>
        <position position="722"/>
    </location>
</feature>
<feature type="modified residue" description="Phosphothreonine" evidence="10">
    <location>
        <position position="729"/>
    </location>
</feature>
<feature type="modified residue" description="Phosphoserine" evidence="10">
    <location>
        <position position="732"/>
    </location>
</feature>
<feature type="modified residue" description="Phosphoserine" evidence="10">
    <location>
        <position position="738"/>
    </location>
</feature>
<feature type="sequence conflict" description="In Ref. 2; CAA44079." evidence="7" ref="2">
    <original>DYLDF</original>
    <variation>RLLGL</variation>
    <location>
        <begin position="18"/>
        <end position="22"/>
    </location>
</feature>
<organism>
    <name type="scientific">Mus musculus</name>
    <name type="common">Mouse</name>
    <dbReference type="NCBI Taxonomy" id="10090"/>
    <lineage>
        <taxon>Eukaryota</taxon>
        <taxon>Metazoa</taxon>
        <taxon>Chordata</taxon>
        <taxon>Craniata</taxon>
        <taxon>Vertebrata</taxon>
        <taxon>Euteleostomi</taxon>
        <taxon>Mammalia</taxon>
        <taxon>Eutheria</taxon>
        <taxon>Euarchontoglires</taxon>
        <taxon>Glires</taxon>
        <taxon>Rodentia</taxon>
        <taxon>Myomorpha</taxon>
        <taxon>Muroidea</taxon>
        <taxon>Muridae</taxon>
        <taxon>Murinae</taxon>
        <taxon>Mus</taxon>
        <taxon>Mus</taxon>
    </lineage>
</organism>
<gene>
    <name type="primary">Mcm3</name>
    <name type="synonym">Mcmd</name>
    <name type="synonym">Mcmd3</name>
</gene>
<reference key="1">
    <citation type="journal article" date="2004" name="Genome Res.">
        <title>The status, quality, and expansion of the NIH full-length cDNA project: the Mammalian Gene Collection (MGC).</title>
        <authorList>
            <consortium name="The MGC Project Team"/>
        </authorList>
    </citation>
    <scope>NUCLEOTIDE SEQUENCE [LARGE SCALE MRNA]</scope>
    <source>
        <strain>FVB/N-3</strain>
        <tissue>Mammary gland</tissue>
    </source>
</reference>
<reference key="2">
    <citation type="journal article" date="1992" name="Nucleic Acids Res.">
        <title>Properties of the nuclear P1 protein, a mammalian homologue of the yeast Mcm3 replication protein.</title>
        <authorList>
            <person name="Thoemmes P."/>
            <person name="Fett R."/>
            <person name="Schray B."/>
            <person name="Burkhart R."/>
            <person name="Barnes M."/>
            <person name="Kennedy C."/>
            <person name="Brown N.C."/>
            <person name="Knippers R."/>
        </authorList>
    </citation>
    <scope>NUCLEOTIDE SEQUENCE [MRNA] OF 18-812</scope>
</reference>
<reference key="3">
    <citation type="journal article" date="1994" name="EMBO J.">
        <title>DNA polymerase alpha associated protein P1, a murine homolog of yeast MCM3, changes its intranuclear distribution during the DNA synthetic period.</title>
        <authorList>
            <person name="Kimura H."/>
            <person name="Nozaki N."/>
            <person name="Sugimoto K."/>
        </authorList>
    </citation>
    <scope>NUCLEOTIDE SEQUENCE [GENOMIC DNA] OF 1-26</scope>
    <scope>INTERACTION WITH DNA POLYMERASE ALPHA</scope>
</reference>
<reference key="4">
    <citation type="journal article" date="2000" name="Blood">
        <title>A novel nuclear phosphoprotein, GANP, is up-regulated in centrocytes of the germinal center and associated with MCM3, a protein essential for DNA replication.</title>
        <authorList>
            <person name="Kuwahara K."/>
            <person name="Yoshida M."/>
            <person name="Kondo E."/>
            <person name="Sakata A."/>
            <person name="Watanabe Y."/>
            <person name="Abe E."/>
            <person name="Kouno Y."/>
            <person name="Tomiyasu S."/>
            <person name="Fujimura S."/>
            <person name="Tokuhisa T."/>
            <person name="Kimura H."/>
            <person name="Ezaki T."/>
            <person name="Sakaguchi N."/>
        </authorList>
    </citation>
    <scope>INTERACTION WITH MCM3AP</scope>
</reference>
<reference key="5">
    <citation type="journal article" date="2007" name="Proc. Natl. Acad. Sci. U.S.A.">
        <title>Large-scale phosphorylation analysis of mouse liver.</title>
        <authorList>
            <person name="Villen J."/>
            <person name="Beausoleil S.A."/>
            <person name="Gerber S.A."/>
            <person name="Gygi S.P."/>
        </authorList>
    </citation>
    <scope>PHOSPHORYLATION [LARGE SCALE ANALYSIS] AT SER-668 AND SER-672</scope>
    <scope>IDENTIFICATION BY MASS SPECTROMETRY [LARGE SCALE ANALYSIS]</scope>
    <source>
        <tissue>Liver</tissue>
    </source>
</reference>
<reference key="6">
    <citation type="journal article" date="2009" name="Mol. Cell. Proteomics">
        <title>Large scale localization of protein phosphorylation by use of electron capture dissociation mass spectrometry.</title>
        <authorList>
            <person name="Sweet S.M."/>
            <person name="Bailey C.M."/>
            <person name="Cunningham D.L."/>
            <person name="Heath J.K."/>
            <person name="Cooper H.J."/>
        </authorList>
    </citation>
    <scope>PHOSPHORYLATION [LARGE SCALE ANALYSIS] AT SER-672</scope>
    <scope>IDENTIFICATION BY MASS SPECTROMETRY [LARGE SCALE ANALYSIS]</scope>
    <source>
        <tissue>Embryonic fibroblast</tissue>
    </source>
</reference>
<reference key="7">
    <citation type="journal article" date="2010" name="Cell">
        <title>A tissue-specific atlas of mouse protein phosphorylation and expression.</title>
        <authorList>
            <person name="Huttlin E.L."/>
            <person name="Jedrychowski M.P."/>
            <person name="Elias J.E."/>
            <person name="Goswami T."/>
            <person name="Rad R."/>
            <person name="Beausoleil S.A."/>
            <person name="Villen J."/>
            <person name="Haas W."/>
            <person name="Sowa M.E."/>
            <person name="Gygi S.P."/>
        </authorList>
    </citation>
    <scope>PHOSPHORYLATION [LARGE SCALE ANALYSIS] AT SER-160; SER-668; SER-672; SER-708; THR-719; THR-729; SER-732 AND SER-738</scope>
    <scope>IDENTIFICATION BY MASS SPECTROMETRY [LARGE SCALE ANALYSIS]</scope>
    <source>
        <tissue>Heart</tissue>
        <tissue>Kidney</tissue>
        <tissue>Liver</tissue>
        <tissue>Lung</tissue>
        <tissue>Pancreas</tissue>
        <tissue>Spleen</tissue>
        <tissue>Testis</tissue>
    </source>
</reference>
<reference key="8">
    <citation type="journal article" date="2013" name="Mol. Cell">
        <title>SIRT5-mediated lysine desuccinylation impacts diverse metabolic pathways.</title>
        <authorList>
            <person name="Park J."/>
            <person name="Chen Y."/>
            <person name="Tishkoff D.X."/>
            <person name="Peng C."/>
            <person name="Tan M."/>
            <person name="Dai L."/>
            <person name="Xie Z."/>
            <person name="Zhang Y."/>
            <person name="Zwaans B.M."/>
            <person name="Skinner M.E."/>
            <person name="Lombard D.B."/>
            <person name="Zhao Y."/>
        </authorList>
    </citation>
    <scope>ACETYLATION [LARGE SCALE ANALYSIS] AT LYS-293 AND LYS-547</scope>
    <scope>IDENTIFICATION BY MASS SPECTROMETRY [LARGE SCALE ANALYSIS]</scope>
    <source>
        <tissue>Embryonic fibroblast</tissue>
    </source>
</reference>
<accession>P25206</accession>
<accession>Q61492</accession>
<protein>
    <recommendedName>
        <fullName>DNA replication licensing factor MCM3</fullName>
        <ecNumber>3.6.4.12</ecNumber>
    </recommendedName>
    <alternativeName>
        <fullName evidence="6">DNA polymerase alpha holoenzyme-associated protein P1</fullName>
    </alternativeName>
    <alternativeName>
        <fullName evidence="6">P1-MCM3</fullName>
    </alternativeName>
</protein>
<dbReference type="EC" id="3.6.4.12"/>
<dbReference type="EMBL" id="BC031700">
    <property type="protein sequence ID" value="AAH31700.1"/>
    <property type="molecule type" value="mRNA"/>
</dbReference>
<dbReference type="EMBL" id="X62154">
    <property type="protein sequence ID" value="CAA44079.1"/>
    <property type="molecule type" value="mRNA"/>
</dbReference>
<dbReference type="EMBL" id="D26088">
    <property type="protein sequence ID" value="BAA05081.1"/>
    <property type="molecule type" value="Genomic_DNA"/>
</dbReference>
<dbReference type="CCDS" id="CCDS14843.1"/>
<dbReference type="PIR" id="S22804">
    <property type="entry name" value="S22804"/>
</dbReference>
<dbReference type="PIR" id="S51615">
    <property type="entry name" value="S51615"/>
</dbReference>
<dbReference type="RefSeq" id="NP_032589.1">
    <property type="nucleotide sequence ID" value="NM_008563.3"/>
</dbReference>
<dbReference type="SMR" id="P25206"/>
<dbReference type="BioGRID" id="201345">
    <property type="interactions" value="45"/>
</dbReference>
<dbReference type="ComplexPortal" id="CPX-2941">
    <property type="entry name" value="MCM complex"/>
</dbReference>
<dbReference type="CORUM" id="P25206"/>
<dbReference type="DIP" id="DIP-45878N"/>
<dbReference type="ELM" id="P25206"/>
<dbReference type="FunCoup" id="P25206">
    <property type="interactions" value="3008"/>
</dbReference>
<dbReference type="IntAct" id="P25206">
    <property type="interactions" value="30"/>
</dbReference>
<dbReference type="STRING" id="10090.ENSMUSP00000059192"/>
<dbReference type="GlyGen" id="P25206">
    <property type="glycosylation" value="3 sites, 1 O-linked glycan (3 sites)"/>
</dbReference>
<dbReference type="iPTMnet" id="P25206"/>
<dbReference type="PhosphoSitePlus" id="P25206"/>
<dbReference type="SwissPalm" id="P25206"/>
<dbReference type="jPOST" id="P25206"/>
<dbReference type="PaxDb" id="10090-ENSMUSP00000059192"/>
<dbReference type="PeptideAtlas" id="P25206"/>
<dbReference type="ProteomicsDB" id="295981"/>
<dbReference type="Pumba" id="P25206"/>
<dbReference type="Antibodypedia" id="1433">
    <property type="antibodies" value="544 antibodies from 40 providers"/>
</dbReference>
<dbReference type="DNASU" id="17215"/>
<dbReference type="Ensembl" id="ENSMUST00000053266.11">
    <property type="protein sequence ID" value="ENSMUSP00000059192.10"/>
    <property type="gene ID" value="ENSMUSG00000041859.11"/>
</dbReference>
<dbReference type="GeneID" id="17215"/>
<dbReference type="KEGG" id="mmu:17215"/>
<dbReference type="UCSC" id="uc007alc.1">
    <property type="organism name" value="mouse"/>
</dbReference>
<dbReference type="AGR" id="MGI:101845"/>
<dbReference type="CTD" id="4172"/>
<dbReference type="MGI" id="MGI:101845">
    <property type="gene designation" value="Mcm3"/>
</dbReference>
<dbReference type="VEuPathDB" id="HostDB:ENSMUSG00000041859"/>
<dbReference type="eggNOG" id="KOG0479">
    <property type="taxonomic scope" value="Eukaryota"/>
</dbReference>
<dbReference type="GeneTree" id="ENSGT01050000244824"/>
<dbReference type="HOGENOM" id="CLU_000995_6_0_1"/>
<dbReference type="InParanoid" id="P25206"/>
<dbReference type="OMA" id="NVYPQED"/>
<dbReference type="OrthoDB" id="1882346at2759"/>
<dbReference type="PhylomeDB" id="P25206"/>
<dbReference type="TreeFam" id="TF106459"/>
<dbReference type="Reactome" id="R-MMU-176187">
    <property type="pathway name" value="Activation of ATR in response to replication stress"/>
</dbReference>
<dbReference type="Reactome" id="R-MMU-68867">
    <property type="pathway name" value="Assembly of the pre-replicative complex"/>
</dbReference>
<dbReference type="Reactome" id="R-MMU-68949">
    <property type="pathway name" value="Orc1 removal from chromatin"/>
</dbReference>
<dbReference type="Reactome" id="R-MMU-68962">
    <property type="pathway name" value="Activation of the pre-replicative complex"/>
</dbReference>
<dbReference type="Reactome" id="R-MMU-69052">
    <property type="pathway name" value="Switching of origins to a post-replicative state"/>
</dbReference>
<dbReference type="BioGRID-ORCS" id="17215">
    <property type="hits" value="27 hits in 82 CRISPR screens"/>
</dbReference>
<dbReference type="CD-CODE" id="01CA17F3">
    <property type="entry name" value="Centrosome"/>
</dbReference>
<dbReference type="ChiTaRS" id="Mcm3">
    <property type="organism name" value="mouse"/>
</dbReference>
<dbReference type="PRO" id="PR:P25206"/>
<dbReference type="Proteomes" id="UP000000589">
    <property type="component" value="Chromosome 1"/>
</dbReference>
<dbReference type="RNAct" id="P25206">
    <property type="molecule type" value="protein"/>
</dbReference>
<dbReference type="Bgee" id="ENSMUSG00000041859">
    <property type="expression patterns" value="Expressed in somite and 241 other cell types or tissues"/>
</dbReference>
<dbReference type="ExpressionAtlas" id="P25206">
    <property type="expression patterns" value="baseline and differential"/>
</dbReference>
<dbReference type="GO" id="GO:0071162">
    <property type="term" value="C:CMG complex"/>
    <property type="evidence" value="ECO:0000250"/>
    <property type="project" value="UniProtKB"/>
</dbReference>
<dbReference type="GO" id="GO:0005737">
    <property type="term" value="C:cytoplasm"/>
    <property type="evidence" value="ECO:0000314"/>
    <property type="project" value="MGI"/>
</dbReference>
<dbReference type="GO" id="GO:0042555">
    <property type="term" value="C:MCM complex"/>
    <property type="evidence" value="ECO:0000250"/>
    <property type="project" value="UniProtKB"/>
</dbReference>
<dbReference type="GO" id="GO:0005634">
    <property type="term" value="C:nucleus"/>
    <property type="evidence" value="ECO:0000314"/>
    <property type="project" value="MGI"/>
</dbReference>
<dbReference type="GO" id="GO:0048471">
    <property type="term" value="C:perinuclear region of cytoplasm"/>
    <property type="evidence" value="ECO:0007669"/>
    <property type="project" value="Ensembl"/>
</dbReference>
<dbReference type="GO" id="GO:0005524">
    <property type="term" value="F:ATP binding"/>
    <property type="evidence" value="ECO:0007669"/>
    <property type="project" value="UniProtKB-KW"/>
</dbReference>
<dbReference type="GO" id="GO:0016887">
    <property type="term" value="F:ATP hydrolysis activity"/>
    <property type="evidence" value="ECO:0007669"/>
    <property type="project" value="InterPro"/>
</dbReference>
<dbReference type="GO" id="GO:0003677">
    <property type="term" value="F:DNA binding"/>
    <property type="evidence" value="ECO:0007669"/>
    <property type="project" value="UniProtKB-KW"/>
</dbReference>
<dbReference type="GO" id="GO:0004386">
    <property type="term" value="F:helicase activity"/>
    <property type="evidence" value="ECO:0007669"/>
    <property type="project" value="UniProtKB-KW"/>
</dbReference>
<dbReference type="GO" id="GO:0006270">
    <property type="term" value="P:DNA replication initiation"/>
    <property type="evidence" value="ECO:0007669"/>
    <property type="project" value="InterPro"/>
</dbReference>
<dbReference type="GO" id="GO:0006279">
    <property type="term" value="P:premeiotic DNA replication"/>
    <property type="evidence" value="ECO:0000303"/>
    <property type="project" value="ComplexPortal"/>
</dbReference>
<dbReference type="CDD" id="cd17754">
    <property type="entry name" value="MCM3"/>
    <property type="match status" value="1"/>
</dbReference>
<dbReference type="FunFam" id="2.20.28.10:FF:000006">
    <property type="entry name" value="DNA helicase"/>
    <property type="match status" value="1"/>
</dbReference>
<dbReference type="FunFam" id="3.30.1640.10:FF:000002">
    <property type="entry name" value="DNA helicase"/>
    <property type="match status" value="1"/>
</dbReference>
<dbReference type="FunFam" id="3.40.50.300:FF:000234">
    <property type="entry name" value="DNA helicase"/>
    <property type="match status" value="1"/>
</dbReference>
<dbReference type="Gene3D" id="2.20.28.10">
    <property type="match status" value="1"/>
</dbReference>
<dbReference type="Gene3D" id="3.30.1640.10">
    <property type="entry name" value="mini-chromosome maintenance (MCM) complex, chain A, domain 1"/>
    <property type="match status" value="1"/>
</dbReference>
<dbReference type="Gene3D" id="2.40.50.140">
    <property type="entry name" value="Nucleic acid-binding proteins"/>
    <property type="match status" value="1"/>
</dbReference>
<dbReference type="Gene3D" id="3.40.50.300">
    <property type="entry name" value="P-loop containing nucleotide triphosphate hydrolases"/>
    <property type="match status" value="1"/>
</dbReference>
<dbReference type="InterPro" id="IPR003593">
    <property type="entry name" value="AAA+_ATPase"/>
</dbReference>
<dbReference type="InterPro" id="IPR031327">
    <property type="entry name" value="MCM"/>
</dbReference>
<dbReference type="InterPro" id="IPR008046">
    <property type="entry name" value="Mcm3"/>
</dbReference>
<dbReference type="InterPro" id="IPR018525">
    <property type="entry name" value="MCM_CS"/>
</dbReference>
<dbReference type="InterPro" id="IPR001208">
    <property type="entry name" value="MCM_dom"/>
</dbReference>
<dbReference type="InterPro" id="IPR041562">
    <property type="entry name" value="MCM_lid"/>
</dbReference>
<dbReference type="InterPro" id="IPR027925">
    <property type="entry name" value="MCM_N"/>
</dbReference>
<dbReference type="InterPro" id="IPR033762">
    <property type="entry name" value="MCM_OB"/>
</dbReference>
<dbReference type="InterPro" id="IPR012340">
    <property type="entry name" value="NA-bd_OB-fold"/>
</dbReference>
<dbReference type="InterPro" id="IPR027417">
    <property type="entry name" value="P-loop_NTPase"/>
</dbReference>
<dbReference type="InterPro" id="IPR056575">
    <property type="entry name" value="WH_MCM3_C"/>
</dbReference>
<dbReference type="PANTHER" id="PTHR11630">
    <property type="entry name" value="DNA REPLICATION LICENSING FACTOR MCM FAMILY MEMBER"/>
    <property type="match status" value="1"/>
</dbReference>
<dbReference type="PANTHER" id="PTHR11630:SF106">
    <property type="entry name" value="DNA REPLICATION LICENSING FACTOR MCM3"/>
    <property type="match status" value="1"/>
</dbReference>
<dbReference type="Pfam" id="PF00493">
    <property type="entry name" value="MCM"/>
    <property type="match status" value="1"/>
</dbReference>
<dbReference type="Pfam" id="PF17855">
    <property type="entry name" value="MCM_lid"/>
    <property type="match status" value="1"/>
</dbReference>
<dbReference type="Pfam" id="PF14551">
    <property type="entry name" value="MCM_N"/>
    <property type="match status" value="1"/>
</dbReference>
<dbReference type="Pfam" id="PF17207">
    <property type="entry name" value="MCM_OB"/>
    <property type="match status" value="1"/>
</dbReference>
<dbReference type="Pfam" id="PF23191">
    <property type="entry name" value="WH_MCM3_C"/>
    <property type="match status" value="1"/>
</dbReference>
<dbReference type="PRINTS" id="PR01657">
    <property type="entry name" value="MCMFAMILY"/>
</dbReference>
<dbReference type="PRINTS" id="PR01659">
    <property type="entry name" value="MCMPROTEIN3"/>
</dbReference>
<dbReference type="SMART" id="SM00382">
    <property type="entry name" value="AAA"/>
    <property type="match status" value="1"/>
</dbReference>
<dbReference type="SMART" id="SM00350">
    <property type="entry name" value="MCM"/>
    <property type="match status" value="1"/>
</dbReference>
<dbReference type="SUPFAM" id="SSF50249">
    <property type="entry name" value="Nucleic acid-binding proteins"/>
    <property type="match status" value="1"/>
</dbReference>
<dbReference type="SUPFAM" id="SSF52540">
    <property type="entry name" value="P-loop containing nucleoside triphosphate hydrolases"/>
    <property type="match status" value="1"/>
</dbReference>
<dbReference type="PROSITE" id="PS00847">
    <property type="entry name" value="MCM_1"/>
    <property type="match status" value="1"/>
</dbReference>
<dbReference type="PROSITE" id="PS50051">
    <property type="entry name" value="MCM_2"/>
    <property type="match status" value="1"/>
</dbReference>
<evidence type="ECO:0000250" key="1">
    <source>
        <dbReference type="UniProtKB" id="P25205"/>
    </source>
</evidence>
<evidence type="ECO:0000250" key="2">
    <source>
        <dbReference type="UniProtKB" id="P49739"/>
    </source>
</evidence>
<evidence type="ECO:0000256" key="3">
    <source>
        <dbReference type="SAM" id="MobiDB-lite"/>
    </source>
</evidence>
<evidence type="ECO:0000269" key="4">
    <source>
    </source>
</evidence>
<evidence type="ECO:0000269" key="5">
    <source>
    </source>
</evidence>
<evidence type="ECO:0000303" key="6">
    <source>
    </source>
</evidence>
<evidence type="ECO:0000305" key="7"/>
<evidence type="ECO:0007744" key="8">
    <source>
    </source>
</evidence>
<evidence type="ECO:0007744" key="9">
    <source>
    </source>
</evidence>
<evidence type="ECO:0007744" key="10">
    <source>
    </source>
</evidence>
<evidence type="ECO:0007744" key="11">
    <source>
    </source>
</evidence>
<sequence length="812" mass="91546">MAGTVVLDDVELREAQRDYLDFLDDEEDQGIYQNKVRELISDNQYRLIVSVNDLRRKNEKRANRLLNNAFEELVAFQRALKDFVASIDATYAKQYEEFYIGLEGSFGSKHVSPRTLTSCFLSCVVCVEGIVTKCSLVRPKVVRSVHYCPATKKTIERRYSDLTTLVAFPSSSVYPTKDEENNPLETEYGLSVYKDHQTITIQEMPEKAPAGQLPRSVDVILDDDLVDKVKPGDRIQVVGTYRCLPGKKGCYTSGTFRTVLIACNVKQMSKDIQPAFSADDIAKIKKFSKTRSKDVFEQLARSLAPSIHGHDYVKKAILCLLLGGVERELENGSHIRGDINILLIGDPSVAKSQLLRYVLCTAPRAIPTTGRGSSGVGLTAAVTTDQETGERRLEAGAMVLADRGVVCIDEFDKMSDMDRTAIHEVMEQGRVTIAKAGIHARLNARCSVLAAANPVYGRYDQYKTPMENIGLQDSLLSRFDLLFIMLDQMDPEQDREISDHVLRMHQYRAPGEQDGDALPLGSSVDILATDDPDFTQDDQQDTRIYEKHDSLLHGTKKKKEKMVSAAFMKKYIHVAKIIKPTLTQESAAYIAEEYSRLRSQDSMSSDTARTSPVTARTLETLIRLATAHAKARMSKTVDLQDAEEAVELVQYAYFKKVLEKEKKRKKASEDESDLEDEEEKSQEDTEQKRKRRKTHAKDGESYDPYDFSEAETQMPQVHTPKTDDSQEKTDDSQETQDSQKVELSEPRLKAFKAALLEVFQEAHEQSVGMLHLTESINRNREEPFSSEEIQACLSRMQDDNQVMVSEGIVFLI</sequence>
<keyword id="KW-0007">Acetylation</keyword>
<keyword id="KW-0067">ATP-binding</keyword>
<keyword id="KW-0131">Cell cycle</keyword>
<keyword id="KW-0158">Chromosome</keyword>
<keyword id="KW-0235">DNA replication</keyword>
<keyword id="KW-0238">DNA-binding</keyword>
<keyword id="KW-0325">Glycoprotein</keyword>
<keyword id="KW-0347">Helicase</keyword>
<keyword id="KW-0378">Hydrolase</keyword>
<keyword id="KW-0547">Nucleotide-binding</keyword>
<keyword id="KW-0539">Nucleus</keyword>
<keyword id="KW-0597">Phosphoprotein</keyword>
<keyword id="KW-1185">Reference proteome</keyword>